<protein>
    <recommendedName>
        <fullName>Autophagy-related protein 17</fullName>
    </recommendedName>
</protein>
<name>ATG17_YEAST</name>
<comment type="function">
    <text evidence="2 3 4 7 8 9 10 11 12 13 14 15 16 18 19 21 22 23 24 27">Autophagy-specific protein that functions with ATG13, ATG29, and CIS1/ATG31 in response to autophagy-inducing signals as a scaffold to recruit other ATG proteins to organize pre-autophagosomal structure (PAS) formation. Modulates the timing and magnitude of the autophagy response, such as the size of the sequestering vesicles, through interacting with and regulating ATG1 kinase activity. Plays particularly a role in pexophagy and nucleophagy. With ATG13, is required for ATG1 activation by autophosphorylation of 'Thr-226'. Recruits ATG9 to the pre-autophagosomal structure. Also plays a role in regulation of filamentous growth.</text>
</comment>
<comment type="subunit">
    <text evidence="2 4 6 7 8 9 12 16 17 18 19 20 23 25 26 28">Forms a complex with ATG13, ATG29 and CIS1/ATG31 (PubMed:17362880, PubMed:18287526). The ATG17-ATG29-ATG31 complex interacts with the ATG1-ATG13 complex (PubMed:10995454, PubMed:15743910, PubMed:15901835, PubMed:19755117, PubMed:19805182, PubMed:19995911, PubMed:21712380, PubMed:22778255, PubMed:22885598, PubMed:30655342). Forms a complex with SNX4 and ATG20 (PubMed:12048214). Interacts with ATG11 and the conserved oligomeric Golgi (COG) complex subunits COG1, COG3 and COG4 (PubMed:15659643, PubMed:20065092). Interacts with ATG9 (via N-terminus); required for recruitment to the PAS during autophagy and starved conditions (PubMed:19371383).</text>
</comment>
<comment type="interaction">
    <interactant intactId="EBI-30856">
        <id>Q06410</id>
    </interactant>
    <interactant intactId="EBI-36188">
        <id>Q06628</id>
        <label>ATG13</label>
    </interactant>
    <organismsDiffer>false</organismsDiffer>
    <experiments>6</experiments>
</comment>
<comment type="interaction">
    <interactant intactId="EBI-30856">
        <id>Q06410</id>
    </interactant>
    <interactant intactId="EBI-34768">
        <id>Q12421</id>
        <label>ATG31</label>
    </interactant>
    <organismsDiffer>false</organismsDiffer>
    <experiments>3</experiments>
</comment>
<comment type="interaction">
    <interactant intactId="EBI-30856">
        <id>Q06410</id>
    </interactant>
    <interactant intactId="EBI-17610">
        <id>P47057</id>
        <label>SNX4</label>
    </interactant>
    <organismsDiffer>false</organismsDiffer>
    <experiments>2</experiments>
</comment>
<comment type="subcellular location">
    <subcellularLocation>
        <location>Cytoplasm</location>
    </subcellularLocation>
    <subcellularLocation>
        <location>Preautophagosomal structure membrane</location>
        <topology>Peripheral membrane protein</topology>
    </subcellularLocation>
</comment>
<comment type="miscellaneous">
    <text evidence="5">Present with 358 molecules/cell in log phase SD medium.</text>
</comment>
<comment type="similarity">
    <text evidence="29">Belongs to the ATG17 family.</text>
</comment>
<sequence length="417" mass="48656">MNEADVTKFVNNARKTLTDAQLLCSSANLRIVDIKKKLSSWQLSISKLNFLIVGLRQQGKFLYTILKEGIGTKLIQKQWNQAVLVVLVDEMKYWQYEITSKVQRLDGIVNELSISEKDDTDPSKLGDYISRDNVNLLNDKLKEVPVIERQIENIKLQYENMVRKVNKELIDTKLTDVTQKFQSKFGIDNLMETNVAEQFSRELTDLEKDLAEIMNSLTQHFDKTLLLQDKKIDNDEREELFKVVQGDDKELYNIFKTLHEVIDDVDKTILNLGQFLQAKIKEKTELHSEVSEIINDFNRNLEYLLIFKDISNLIDSFKNSCTQDIQTTKELCEFYDNFEESYGNLVLEAKRRKDVANRMKTILKDCEKQLQNLDAQDQEERQNFIAENGTYLPETIWPGKIDDFSSLYTLNYNVKNP</sequence>
<dbReference type="EMBL" id="U20939">
    <property type="protein sequence ID" value="AAB67509.1"/>
    <property type="molecule type" value="Genomic_DNA"/>
</dbReference>
<dbReference type="EMBL" id="BK006945">
    <property type="protein sequence ID" value="DAA09725.1"/>
    <property type="molecule type" value="Genomic_DNA"/>
</dbReference>
<dbReference type="PIR" id="S53410">
    <property type="entry name" value="S53410"/>
</dbReference>
<dbReference type="RefSeq" id="NP_013527.3">
    <property type="nucleotide sequence ID" value="NM_001182311.3"/>
</dbReference>
<dbReference type="SMR" id="Q06410"/>
<dbReference type="BioGRID" id="31682">
    <property type="interactions" value="217"/>
</dbReference>
<dbReference type="ComplexPortal" id="CPX-1676">
    <property type="entry name" value="ATG1/ULK1 protein kinase complex"/>
</dbReference>
<dbReference type="ComplexPortal" id="CPX-397">
    <property type="entry name" value="Atg17-Atg31-Atg29 complex"/>
</dbReference>
<dbReference type="DIP" id="DIP-1490N"/>
<dbReference type="FunCoup" id="Q06410">
    <property type="interactions" value="212"/>
</dbReference>
<dbReference type="IntAct" id="Q06410">
    <property type="interactions" value="85"/>
</dbReference>
<dbReference type="MINT" id="Q06410"/>
<dbReference type="STRING" id="4932.YLR423C"/>
<dbReference type="iPTMnet" id="Q06410"/>
<dbReference type="PaxDb" id="4932-YLR423C"/>
<dbReference type="PeptideAtlas" id="Q06410"/>
<dbReference type="EnsemblFungi" id="YLR423C_mRNA">
    <property type="protein sequence ID" value="YLR423C"/>
    <property type="gene ID" value="YLR423C"/>
</dbReference>
<dbReference type="GeneID" id="851142"/>
<dbReference type="KEGG" id="sce:YLR423C"/>
<dbReference type="AGR" id="SGD:S000004415"/>
<dbReference type="SGD" id="S000004415">
    <property type="gene designation" value="ATG17"/>
</dbReference>
<dbReference type="VEuPathDB" id="FungiDB:YLR423C"/>
<dbReference type="eggNOG" id="ENOG502QQDW">
    <property type="taxonomic scope" value="Eukaryota"/>
</dbReference>
<dbReference type="HOGENOM" id="CLU_051526_0_0_1"/>
<dbReference type="InParanoid" id="Q06410"/>
<dbReference type="OMA" id="PENIWPN"/>
<dbReference type="OrthoDB" id="1937984at2759"/>
<dbReference type="BioCyc" id="YEAST:G3O-32483-MONOMER"/>
<dbReference type="BioGRID-ORCS" id="851142">
    <property type="hits" value="0 hits in 10 CRISPR screens"/>
</dbReference>
<dbReference type="CD-CODE" id="4F15E4D1">
    <property type="entry name" value="ATG condensate"/>
</dbReference>
<dbReference type="PRO" id="PR:Q06410"/>
<dbReference type="Proteomes" id="UP000002311">
    <property type="component" value="Chromosome XII"/>
</dbReference>
<dbReference type="RNAct" id="Q06410">
    <property type="molecule type" value="protein"/>
</dbReference>
<dbReference type="GO" id="GO:1990316">
    <property type="term" value="C:Atg1/ULK1 kinase complex"/>
    <property type="evidence" value="ECO:0000314"/>
    <property type="project" value="SGD"/>
</dbReference>
<dbReference type="GO" id="GO:0005737">
    <property type="term" value="C:cytoplasm"/>
    <property type="evidence" value="ECO:0000314"/>
    <property type="project" value="SGD"/>
</dbReference>
<dbReference type="GO" id="GO:0005634">
    <property type="term" value="C:nucleus"/>
    <property type="evidence" value="ECO:0007005"/>
    <property type="project" value="SGD"/>
</dbReference>
<dbReference type="GO" id="GO:0000407">
    <property type="term" value="C:phagophore assembly site"/>
    <property type="evidence" value="ECO:0000314"/>
    <property type="project" value="SGD"/>
</dbReference>
<dbReference type="GO" id="GO:0034045">
    <property type="term" value="C:phagophore assembly site membrane"/>
    <property type="evidence" value="ECO:0007669"/>
    <property type="project" value="UniProtKB-SubCell"/>
</dbReference>
<dbReference type="GO" id="GO:0032991">
    <property type="term" value="C:protein-containing complex"/>
    <property type="evidence" value="ECO:0000353"/>
    <property type="project" value="ComplexPortal"/>
</dbReference>
<dbReference type="GO" id="GO:0120095">
    <property type="term" value="C:vacuole-isolation membrane contact site"/>
    <property type="evidence" value="ECO:0000314"/>
    <property type="project" value="SGD"/>
</dbReference>
<dbReference type="GO" id="GO:0060090">
    <property type="term" value="F:molecular adaptor activity"/>
    <property type="evidence" value="ECO:0000316"/>
    <property type="project" value="SGD"/>
</dbReference>
<dbReference type="GO" id="GO:0030295">
    <property type="term" value="F:protein kinase activator activity"/>
    <property type="evidence" value="ECO:0000315"/>
    <property type="project" value="SGD"/>
</dbReference>
<dbReference type="GO" id="GO:0000149">
    <property type="term" value="F:SNARE binding"/>
    <property type="evidence" value="ECO:0000314"/>
    <property type="project" value="SGD"/>
</dbReference>
<dbReference type="GO" id="GO:0000045">
    <property type="term" value="P:autophagosome assembly"/>
    <property type="evidence" value="ECO:0000314"/>
    <property type="project" value="SGD"/>
</dbReference>
<dbReference type="GO" id="GO:0006914">
    <property type="term" value="P:autophagy"/>
    <property type="evidence" value="ECO:0000314"/>
    <property type="project" value="ComplexPortal"/>
</dbReference>
<dbReference type="GO" id="GO:0000422">
    <property type="term" value="P:autophagy of mitochondrion"/>
    <property type="evidence" value="ECO:0000315"/>
    <property type="project" value="SGD"/>
</dbReference>
<dbReference type="GO" id="GO:0006995">
    <property type="term" value="P:cellular response to nitrogen starvation"/>
    <property type="evidence" value="ECO:0000314"/>
    <property type="project" value="SGD"/>
</dbReference>
<dbReference type="GO" id="GO:0000423">
    <property type="term" value="P:mitophagy"/>
    <property type="evidence" value="ECO:0000318"/>
    <property type="project" value="GO_Central"/>
</dbReference>
<dbReference type="GO" id="GO:0044804">
    <property type="term" value="P:nucleophagy"/>
    <property type="evidence" value="ECO:0000315"/>
    <property type="project" value="SGD"/>
</dbReference>
<dbReference type="GO" id="GO:0000425">
    <property type="term" value="P:pexophagy"/>
    <property type="evidence" value="ECO:0000315"/>
    <property type="project" value="SGD"/>
</dbReference>
<dbReference type="GO" id="GO:0034727">
    <property type="term" value="P:piecemeal microautophagy of the nucleus"/>
    <property type="evidence" value="ECO:0000315"/>
    <property type="project" value="SGD"/>
</dbReference>
<dbReference type="GO" id="GO:2000786">
    <property type="term" value="P:positive regulation of autophagosome assembly"/>
    <property type="evidence" value="ECO:0000316"/>
    <property type="project" value="SGD"/>
</dbReference>
<dbReference type="GO" id="GO:0045772">
    <property type="term" value="P:positive regulation of autophagosome size"/>
    <property type="evidence" value="ECO:0000315"/>
    <property type="project" value="SGD"/>
</dbReference>
<dbReference type="GO" id="GO:0034497">
    <property type="term" value="P:protein localization to phagophore assembly site"/>
    <property type="evidence" value="ECO:0000314"/>
    <property type="project" value="SGD"/>
</dbReference>
<dbReference type="GO" id="GO:0042594">
    <property type="term" value="P:response to starvation"/>
    <property type="evidence" value="ECO:0000303"/>
    <property type="project" value="ComplexPortal"/>
</dbReference>
<dbReference type="InterPro" id="IPR007240">
    <property type="entry name" value="Atg17"/>
</dbReference>
<dbReference type="InterPro" id="IPR045326">
    <property type="entry name" value="ATG17-like_dom"/>
</dbReference>
<dbReference type="PANTHER" id="PTHR28005">
    <property type="entry name" value="AUTOPHAGY-RELATED PROTEIN 17"/>
    <property type="match status" value="1"/>
</dbReference>
<dbReference type="PANTHER" id="PTHR28005:SF1">
    <property type="entry name" value="AUTOPHAGY-RELATED PROTEIN 17"/>
    <property type="match status" value="1"/>
</dbReference>
<dbReference type="Pfam" id="PF04108">
    <property type="entry name" value="ATG17_like"/>
    <property type="match status" value="1"/>
</dbReference>
<organism>
    <name type="scientific">Saccharomyces cerevisiae (strain ATCC 204508 / S288c)</name>
    <name type="common">Baker's yeast</name>
    <dbReference type="NCBI Taxonomy" id="559292"/>
    <lineage>
        <taxon>Eukaryota</taxon>
        <taxon>Fungi</taxon>
        <taxon>Dikarya</taxon>
        <taxon>Ascomycota</taxon>
        <taxon>Saccharomycotina</taxon>
        <taxon>Saccharomycetes</taxon>
        <taxon>Saccharomycetales</taxon>
        <taxon>Saccharomycetaceae</taxon>
        <taxon>Saccharomyces</taxon>
    </lineage>
</organism>
<accession>Q06410</accession>
<accession>D6VZ59</accession>
<proteinExistence type="evidence at protein level"/>
<reference key="1">
    <citation type="journal article" date="1997" name="Nature">
        <title>The nucleotide sequence of Saccharomyces cerevisiae chromosome XII.</title>
        <authorList>
            <person name="Johnston M."/>
            <person name="Hillier L.W."/>
            <person name="Riles L."/>
            <person name="Albermann K."/>
            <person name="Andre B."/>
            <person name="Ansorge W."/>
            <person name="Benes V."/>
            <person name="Brueckner M."/>
            <person name="Delius H."/>
            <person name="Dubois E."/>
            <person name="Duesterhoeft A."/>
            <person name="Entian K.-D."/>
            <person name="Floeth M."/>
            <person name="Goffeau A."/>
            <person name="Hebling U."/>
            <person name="Heumann K."/>
            <person name="Heuss-Neitzel D."/>
            <person name="Hilbert H."/>
            <person name="Hilger F."/>
            <person name="Kleine K."/>
            <person name="Koetter P."/>
            <person name="Louis E.J."/>
            <person name="Messenguy F."/>
            <person name="Mewes H.-W."/>
            <person name="Miosga T."/>
            <person name="Moestl D."/>
            <person name="Mueller-Auer S."/>
            <person name="Nentwich U."/>
            <person name="Obermaier B."/>
            <person name="Piravandi E."/>
            <person name="Pohl T.M."/>
            <person name="Portetelle D."/>
            <person name="Purnelle B."/>
            <person name="Rechmann S."/>
            <person name="Rieger M."/>
            <person name="Rinke M."/>
            <person name="Rose M."/>
            <person name="Scharfe M."/>
            <person name="Scherens B."/>
            <person name="Scholler P."/>
            <person name="Schwager C."/>
            <person name="Schwarz S."/>
            <person name="Underwood A.P."/>
            <person name="Urrestarazu L.A."/>
            <person name="Vandenbol M."/>
            <person name="Verhasselt P."/>
            <person name="Vierendeels F."/>
            <person name="Voet M."/>
            <person name="Volckaert G."/>
            <person name="Voss H."/>
            <person name="Wambutt R."/>
            <person name="Wedler E."/>
            <person name="Wedler H."/>
            <person name="Zimmermann F.K."/>
            <person name="Zollner A."/>
            <person name="Hani J."/>
            <person name="Hoheisel J.D."/>
        </authorList>
    </citation>
    <scope>NUCLEOTIDE SEQUENCE [LARGE SCALE GENOMIC DNA]</scope>
    <source>
        <strain>ATCC 204508 / S288c</strain>
    </source>
</reference>
<reference key="2">
    <citation type="journal article" date="2014" name="G3 (Bethesda)">
        <title>The reference genome sequence of Saccharomyces cerevisiae: Then and now.</title>
        <authorList>
            <person name="Engel S.R."/>
            <person name="Dietrich F.S."/>
            <person name="Fisk D.G."/>
            <person name="Binkley G."/>
            <person name="Balakrishnan R."/>
            <person name="Costanzo M.C."/>
            <person name="Dwight S.S."/>
            <person name="Hitz B.C."/>
            <person name="Karra K."/>
            <person name="Nash R.S."/>
            <person name="Weng S."/>
            <person name="Wong E.D."/>
            <person name="Lloyd P."/>
            <person name="Skrzypek M.S."/>
            <person name="Miyasato S.R."/>
            <person name="Simison M."/>
            <person name="Cherry J.M."/>
        </authorList>
    </citation>
    <scope>GENOME REANNOTATION</scope>
    <source>
        <strain>ATCC 204508 / S288c</strain>
    </source>
</reference>
<reference key="3">
    <citation type="journal article" date="2000" name="J. Cell Biol.">
        <title>Tor-mediated induction of autophagy via an Apg1 protein kinase complex.</title>
        <authorList>
            <person name="Kamada Y."/>
            <person name="Funakoshi T."/>
            <person name="Shintani T."/>
            <person name="Nagano K."/>
            <person name="Ohsumi M."/>
            <person name="Ohsumi Y."/>
        </authorList>
    </citation>
    <scope>FUNCTION</scope>
    <scope>INTERACTION WITH ATG1</scope>
</reference>
<reference key="4">
    <citation type="journal article" date="2001" name="J. Cell Biol.">
        <title>A protein interaction map for cell polarity development.</title>
        <authorList>
            <person name="Drees B.L."/>
            <person name="Sundin B.A."/>
            <person name="Brazeau E."/>
            <person name="Caviston J.P."/>
            <person name="Chen G.-C."/>
            <person name="Guo W."/>
            <person name="Kozminski K.G."/>
            <person name="Lau M.W."/>
            <person name="Moskow J.J."/>
            <person name="Tong A."/>
            <person name="Schenkman L.R."/>
            <person name="McKenzie A. III"/>
            <person name="Brennwald P.J."/>
            <person name="Longtine M."/>
            <person name="Bi E."/>
            <person name="Chan C."/>
            <person name="Novick P."/>
            <person name="Boone C."/>
            <person name="Pringle J.R."/>
            <person name="Davis T.N."/>
            <person name="Fields S."/>
            <person name="Drubin D.G."/>
        </authorList>
    </citation>
    <scope>SUBCELLULAR LOCATION</scope>
</reference>
<reference key="5">
    <citation type="journal article" date="2001" name="Mol. Cell. Biol.">
        <title>Antagonistic controls of autophagy and glycogen accumulation by Snf1p, the yeast homolog of AMP-activated protein kinase, and the cyclin-dependent kinase Pho85p.</title>
        <authorList>
            <person name="Wang Z."/>
            <person name="Wilson W.A."/>
            <person name="Fujino M.A."/>
            <person name="Roach P.J."/>
        </authorList>
    </citation>
    <scope>FUNCTION</scope>
</reference>
<reference key="6">
    <citation type="journal article" date="2002" name="J. Biol. Chem.">
        <title>Cooperative binding of the cytoplasm to vacuole targeting pathway proteins, Cvt13 and Cvt20, to phosphatidylinositol 3-phosphate at the pre-autophagosomal structure is required for selective autophagy.</title>
        <authorList>
            <person name="Nice D.C. III"/>
            <person name="Sato T.K."/>
            <person name="Stromhaug P.E."/>
            <person name="Emr S.D."/>
            <person name="Klionsky D.J."/>
        </authorList>
    </citation>
    <scope>FUNCTION</scope>
    <scope>SUBCELLULAR LOCATION</scope>
    <scope>INTERACTION WITH ATG20 AND SNX4</scope>
</reference>
<reference key="7">
    <citation type="journal article" date="2003" name="Dev. Cell">
        <title>A unified nomenclature for yeast autophagy-related genes.</title>
        <authorList>
            <person name="Klionsky D.J."/>
            <person name="Cregg J.M."/>
            <person name="Dunn W.A. Jr."/>
            <person name="Emr S.D."/>
            <person name="Sakai Y."/>
            <person name="Sandoval I.V."/>
            <person name="Sibirny A."/>
            <person name="Subramani S."/>
            <person name="Thumm M."/>
            <person name="Veenhuis M."/>
            <person name="Ohsumi Y."/>
        </authorList>
    </citation>
    <scope>NOMENCLATURE</scope>
</reference>
<reference key="8">
    <citation type="journal article" date="2003" name="Nature">
        <title>Global analysis of protein localization in budding yeast.</title>
        <authorList>
            <person name="Huh W.-K."/>
            <person name="Falvo J.V."/>
            <person name="Gerke L.C."/>
            <person name="Carroll A.S."/>
            <person name="Howson R.W."/>
            <person name="Weissman J.S."/>
            <person name="O'Shea E.K."/>
        </authorList>
    </citation>
    <scope>SUBCELLULAR LOCATION [LARGE SCALE ANALYSIS]</scope>
</reference>
<reference key="9">
    <citation type="journal article" date="2003" name="Nature">
        <title>Global analysis of protein expression in yeast.</title>
        <authorList>
            <person name="Ghaemmaghami S."/>
            <person name="Huh W.-K."/>
            <person name="Bower K."/>
            <person name="Howson R.W."/>
            <person name="Belle A."/>
            <person name="Dephoure N."/>
            <person name="O'Shea E.K."/>
            <person name="Weissman J.S."/>
        </authorList>
    </citation>
    <scope>LEVEL OF PROTEIN EXPRESSION [LARGE SCALE ANALYSIS]</scope>
</reference>
<reference key="10">
    <citation type="journal article" date="2005" name="Mol. Biol. Cell">
        <title>Atg11 links cargo to the vesicle-forming machinery in the cytoplasm to vacuole targeting pathway.</title>
        <authorList>
            <person name="Yorimitsu T."/>
            <person name="Klionsky D.J."/>
        </authorList>
    </citation>
    <scope>INTERACTION WITH ATG11</scope>
</reference>
<reference key="11">
    <citation type="journal article" date="2005" name="Mol. Biol. Cell">
        <title>Atg17 functions in cooperation with Atg1 and Atg13 in yeast autophagy.</title>
        <authorList>
            <person name="Kabeya Y."/>
            <person name="Kamada Y."/>
            <person name="Baba M."/>
            <person name="Takikawa H."/>
            <person name="Sasaki M."/>
            <person name="Ohsumi Y."/>
        </authorList>
    </citation>
    <scope>FUNCTION</scope>
    <scope>INTERACTION WITH ATG1 AND ATG13</scope>
    <scope>MUTAGENESIS OF CYS-24</scope>
</reference>
<reference key="12">
    <citation type="journal article" date="2005" name="Mol. Biol. Cell">
        <title>Atg17 regulates the magnitude of the autophagic response.</title>
        <authorList>
            <person name="Cheong H."/>
            <person name="Yorimitsu T."/>
            <person name="Reggiori F."/>
            <person name="Legakis J.E."/>
            <person name="Wang C.W."/>
            <person name="Klionsky D.J."/>
        </authorList>
    </citation>
    <scope>FUNCTION</scope>
    <scope>SUBCELLULAR LOCATION</scope>
    <scope>INTERACTION WITH ATG1 AND ATG13</scope>
</reference>
<reference key="13">
    <citation type="journal article" date="2007" name="Autophagy">
        <title>Overexpression of autophagy-related genes inhibits yeast filamentous growth.</title>
        <authorList>
            <person name="Ma J."/>
            <person name="Jin R."/>
            <person name="Dobry C.J."/>
            <person name="Lawson S.K."/>
            <person name="Kumar A."/>
        </authorList>
    </citation>
    <scope>FUNCTION</scope>
</reference>
<reference key="14">
    <citation type="journal article" date="2007" name="Biochem. Biophys. Res. Commun.">
        <title>Cis1/Atg31 is required for autophagosome formation in Saccharomyces cerevisiae.</title>
        <authorList>
            <person name="Kabeya Y."/>
            <person name="Kawamata T."/>
            <person name="Suzuki K."/>
            <person name="Ohsumi Y."/>
        </authorList>
    </citation>
    <scope>FUNCTION</scope>
    <scope>SUBCELLULAR LOCATION</scope>
    <scope>INTERACTION WITH CIS1</scope>
</reference>
<reference key="15">
    <citation type="journal article" date="2008" name="J. Cell Biol.">
        <title>Quantitative analysis of autophagy-related protein stoichiometry by fluorescence microscopy.</title>
        <authorList>
            <person name="Geng J."/>
            <person name="Baba M."/>
            <person name="Nair U."/>
            <person name="Klionsky D.J."/>
        </authorList>
    </citation>
    <scope>SUBCELLULAR LOCATION</scope>
</reference>
<reference key="16">
    <citation type="journal article" date="2008" name="Mol. Biol. Cell">
        <title>The Atg1 kinase complex is involved in the regulation of protein recruitment to initiate sequestering vesicle formation for nonspecific autophagy in Saccharomyces cerevisiae.</title>
        <authorList>
            <person name="Cheong H."/>
            <person name="Nair U."/>
            <person name="Geng J."/>
            <person name="Klionsky D.J."/>
        </authorList>
    </citation>
    <scope>FUNCTION</scope>
    <scope>SUBCELLULAR LOCATION</scope>
</reference>
<reference key="17">
    <citation type="journal article" date="2008" name="Mol. Biol. Cell">
        <title>Organization of the pre-autophagosomal structure responsible for autophagosome formation.</title>
        <authorList>
            <person name="Kawamata T."/>
            <person name="Kamada Y."/>
            <person name="Kabeya Y."/>
            <person name="Sekito T."/>
            <person name="Ohsumi Y."/>
        </authorList>
    </citation>
    <scope>FUNCTION</scope>
    <scope>SUBCELLULAR LOCATION</scope>
    <scope>INTERACTION WITH ATG29</scope>
</reference>
<reference key="18">
    <citation type="journal article" date="2008" name="Mol. Biol. Cell">
        <title>Piecemeal microautophagy of the nucleus requires the core macroautophagy genes.</title>
        <authorList>
            <person name="Krick R."/>
            <person name="Muehe Y."/>
            <person name="Prick T."/>
            <person name="Bremer S."/>
            <person name="Schlotterhose P."/>
            <person name="Eskelinen E.L."/>
            <person name="Millen J."/>
            <person name="Goldfarb D.S."/>
            <person name="Thumm M."/>
        </authorList>
    </citation>
    <scope>FUNCTION</scope>
</reference>
<reference key="19">
    <citation type="journal article" date="2008" name="Traffic">
        <title>Irs4p and Tax4p: two redundant EH domain proteins involved in autophagy.</title>
        <authorList>
            <person name="Bugnicourt A."/>
            <person name="Mari M."/>
            <person name="Reggiori F."/>
            <person name="Haguenauer-Tsapis R."/>
            <person name="Galan J.M."/>
        </authorList>
    </citation>
    <scope>SUBCELLULAR LOCATION</scope>
</reference>
<reference key="20">
    <citation type="journal article" date="2009" name="Autophagy">
        <title>Tap42-associated protein phosphatase type 2A negatively regulates induction of autophagy.</title>
        <authorList>
            <person name="Yorimitsu T."/>
            <person name="He C."/>
            <person name="Wang K."/>
            <person name="Klionsky D.J."/>
        </authorList>
    </citation>
    <scope>FUNCTION</scope>
</reference>
<reference key="21">
    <citation type="journal article" date="2009" name="Biochem. Biophys. Res. Commun.">
        <title>Lap3 is a selective target of autophagy in yeast, Saccharomyces cerevisiae.</title>
        <authorList>
            <person name="Kageyama T."/>
            <person name="Suzuki K."/>
            <person name="Ohsumi Y."/>
        </authorList>
    </citation>
    <scope>FUNCTION</scope>
</reference>
<reference key="22">
    <citation type="journal article" date="2009" name="Biochem. Biophys. Res. Commun.">
        <title>Characterization of the Atg17-Atg29-Atg31 complex specifically required for starvation-induced autophagy in Saccharomyces cerevisiae.</title>
        <authorList>
            <person name="Kabeya Y."/>
            <person name="Noda N.N."/>
            <person name="Fujioka Y."/>
            <person name="Suzuki K."/>
            <person name="Inagaki F."/>
            <person name="Ohsumi Y."/>
        </authorList>
    </citation>
    <scope>IDENTIFICATION IN THE ATG17-ATG29-ATG31 COMPLEX</scope>
    <scope>INTERACTION WITH THE ATG1-ATG13 COMPLEX</scope>
</reference>
<reference key="23">
    <citation type="journal article" date="2009" name="Genes Cells">
        <title>Atg17 recruits Atg9 to organize the pre-autophagosomal structure.</title>
        <authorList>
            <person name="Sekito T."/>
            <person name="Kawamata T."/>
            <person name="Ichikawa R."/>
            <person name="Suzuki K."/>
            <person name="Ohsumi Y."/>
        </authorList>
    </citation>
    <scope>FUNCTION</scope>
    <scope>INTERACTION WITH ATG9</scope>
</reference>
<reference key="24">
    <citation type="journal article" date="2009" name="Proc. Natl. Acad. Sci. U.S.A.">
        <title>The Tor and PKA signaling pathways independently target the Atg1/Atg13 protein kinase complex to control autophagy.</title>
        <authorList>
            <person name="Stephan J.S."/>
            <person name="Yeh Y.Y."/>
            <person name="Ramachandran V."/>
            <person name="Deminoff S.J."/>
            <person name="Herman P.K."/>
        </authorList>
    </citation>
    <scope>FUNCTION</scope>
    <scope>INTERACTION WITH ATG13</scope>
</reference>
<reference key="25">
    <citation type="journal article" date="2010" name="Genetics">
        <title>Autophosphorylation within the Atg1 activation loop is required for both kinase activity and the induction of autophagy in Saccharomyces cerevisiae.</title>
        <authorList>
            <person name="Yeh Y.Y."/>
            <person name="Wrasman K."/>
            <person name="Herman P.K."/>
        </authorList>
    </citation>
    <scope>FUNCTION</scope>
</reference>
<reference key="26">
    <citation type="journal article" date="2010" name="J. Biol. Chem.">
        <title>Lipid binding requirements for oxysterol-binding protein Kes1 inhibition of autophagy and endosome-trans-Golgi trafficking pathways.</title>
        <authorList>
            <person name="LeBlanc M.A."/>
            <person name="McMaster C.R."/>
        </authorList>
    </citation>
    <scope>FUNCTION</scope>
</reference>
<reference key="27">
    <citation type="journal article" date="2010" name="J. Cell Biol.">
        <title>The conserved oligomeric Golgi complex is involved in double-membrane vesicle formation during autophagy.</title>
        <authorList>
            <person name="Yen W.L."/>
            <person name="Shintani T."/>
            <person name="Nair U."/>
            <person name="Cao Y."/>
            <person name="Richardson B.C."/>
            <person name="Li Z."/>
            <person name="Hughson F.M."/>
            <person name="Baba M."/>
            <person name="Klionsky D.J."/>
        </authorList>
    </citation>
    <scope>INTERACTION WITH COG1; COG3 AND COG4</scope>
</reference>
<reference key="28">
    <citation type="journal article" date="2010" name="Mol. Cell. Biol.">
        <title>Tor directly controls the Atg1 kinase complex to regulate autophagy.</title>
        <authorList>
            <person name="Kamada Y."/>
            <person name="Yoshino K."/>
            <person name="Kondo C."/>
            <person name="Kawamata T."/>
            <person name="Oshiro N."/>
            <person name="Yonezawa K."/>
            <person name="Ohsumi Y."/>
        </authorList>
    </citation>
    <scope>FUNCTION</scope>
    <scope>SUBCELLULAR LOCATION</scope>
    <scope>INTERACTION WITH ATG1</scope>
</reference>
<reference key="29">
    <citation type="journal article" date="2011" name="Biochem. Biophys. Res. Commun.">
        <title>Sphingolipid synthesis is involved in autophagy in Saccharomyces cerevisiae.</title>
        <authorList>
            <person name="Yamagata M."/>
            <person name="Obara K."/>
            <person name="Kihara A."/>
        </authorList>
    </citation>
    <scope>SUBCELLULAR LOCATION</scope>
</reference>
<reference key="30">
    <citation type="journal article" date="2011" name="J. Biol. Chem.">
        <title>An Atg13 protein-mediated self-association of the Atg1 protein kinase is important for the induction of autophagy.</title>
        <authorList>
            <person name="Yeh Y.Y."/>
            <person name="Shah K.H."/>
            <person name="Herman P.K."/>
        </authorList>
    </citation>
    <scope>FUNCTION</scope>
    <scope>INTERACTION WITH ATG13</scope>
</reference>
<reference key="31">
    <citation type="journal article" date="2012" name="EMBO J.">
        <title>Binding of the Atg1/ULK1 kinase to the ubiquitin-like protein Atg8 regulates autophagy.</title>
        <authorList>
            <person name="Kraft C."/>
            <person name="Kijanska M."/>
            <person name="Kalie E."/>
            <person name="Siergiejuk E."/>
            <person name="Lee S.S."/>
            <person name="Semplicio G."/>
            <person name="Stoffel I."/>
            <person name="Brezovich A."/>
            <person name="Verma M."/>
            <person name="Hansmann I."/>
            <person name="Ammerer G."/>
            <person name="Hofmann K."/>
            <person name="Tooze S."/>
            <person name="Peter M."/>
        </authorList>
    </citation>
    <scope>INTERACTION WITH ATG13</scope>
</reference>
<reference key="32">
    <citation type="journal article" date="2012" name="J. Biol. Chem.">
        <title>The autophagy-related protein kinase Atg1 interacts with the ubiquitin-like protein Atg8 via the Atg8 family interacting motif to facilitate autophagosome formation.</title>
        <authorList>
            <person name="Nakatogawa H."/>
            <person name="Ohbayashi S."/>
            <person name="Sakoh-Nakatogawa M."/>
            <person name="Kakuta S."/>
            <person name="Suzuki S.W."/>
            <person name="Kirisako H."/>
            <person name="Kondo-Kakuta C."/>
            <person name="Noda N.N."/>
            <person name="Yamamoto H."/>
            <person name="Ohsumi Y."/>
        </authorList>
    </citation>
    <scope>INTERACTION WITH ATG1</scope>
</reference>
<reference key="33">
    <citation type="journal article" date="2012" name="PLoS ONE">
        <title>A late form of nucleophagy in Saccharomyces cerevisiae.</title>
        <authorList>
            <person name="Mijaljica D."/>
            <person name="Prescott M."/>
            <person name="Devenish R.J."/>
        </authorList>
    </citation>
    <scope>FUNCTION</scope>
</reference>
<reference key="34">
    <citation type="journal article" date="2013" name="Proc. Natl. Acad. Sci. U.S.A.">
        <title>DNA damage checkpoint triggers autophagy to regulate the initiation of anaphase.</title>
        <authorList>
            <person name="Dotiwala F."/>
            <person name="Eapen V.V."/>
            <person name="Harrison J.C."/>
            <person name="Arbel-Eden A."/>
            <person name="Ranade V."/>
            <person name="Yoshida S."/>
            <person name="Haber J.E."/>
        </authorList>
    </citation>
    <scope>FUNCTION</scope>
</reference>
<reference key="35">
    <citation type="journal article" date="2019" name="Proc. Natl. Acad. Sci. U.S.A.">
        <title>PP2C phosphatases promote autophagy by dephosphorylation of the Atg1 complex.</title>
        <authorList>
            <person name="Memisoglu G."/>
            <person name="Eapen V.V."/>
            <person name="Yang Y."/>
            <person name="Klionsky D.J."/>
            <person name="Haber J.E."/>
        </authorList>
    </citation>
    <scope>INTERACTION WITH ATG13</scope>
</reference>
<evidence type="ECO:0000255" key="1"/>
<evidence type="ECO:0000269" key="2">
    <source>
    </source>
</evidence>
<evidence type="ECO:0000269" key="3">
    <source>
    </source>
</evidence>
<evidence type="ECO:0000269" key="4">
    <source>
    </source>
</evidence>
<evidence type="ECO:0000269" key="5">
    <source>
    </source>
</evidence>
<evidence type="ECO:0000269" key="6">
    <source>
    </source>
</evidence>
<evidence type="ECO:0000269" key="7">
    <source>
    </source>
</evidence>
<evidence type="ECO:0000269" key="8">
    <source>
    </source>
</evidence>
<evidence type="ECO:0000269" key="9">
    <source>
    </source>
</evidence>
<evidence type="ECO:0000269" key="10">
    <source>
    </source>
</evidence>
<evidence type="ECO:0000269" key="11">
    <source>
    </source>
</evidence>
<evidence type="ECO:0000269" key="12">
    <source>
    </source>
</evidence>
<evidence type="ECO:0000269" key="13">
    <source>
    </source>
</evidence>
<evidence type="ECO:0000269" key="14">
    <source>
    </source>
</evidence>
<evidence type="ECO:0000269" key="15">
    <source>
    </source>
</evidence>
<evidence type="ECO:0000269" key="16">
    <source>
    </source>
</evidence>
<evidence type="ECO:0000269" key="17">
    <source>
    </source>
</evidence>
<evidence type="ECO:0000269" key="18">
    <source>
    </source>
</evidence>
<evidence type="ECO:0000269" key="19">
    <source>
    </source>
</evidence>
<evidence type="ECO:0000269" key="20">
    <source>
    </source>
</evidence>
<evidence type="ECO:0000269" key="21">
    <source>
    </source>
</evidence>
<evidence type="ECO:0000269" key="22">
    <source>
    </source>
</evidence>
<evidence type="ECO:0000269" key="23">
    <source>
    </source>
</evidence>
<evidence type="ECO:0000269" key="24">
    <source>
    </source>
</evidence>
<evidence type="ECO:0000269" key="25">
    <source>
    </source>
</evidence>
<evidence type="ECO:0000269" key="26">
    <source>
    </source>
</evidence>
<evidence type="ECO:0000269" key="27">
    <source>
    </source>
</evidence>
<evidence type="ECO:0000269" key="28">
    <source>
    </source>
</evidence>
<evidence type="ECO:0000305" key="29"/>
<gene>
    <name type="primary">ATG17</name>
    <name type="synonym">APG17</name>
    <name type="ordered locus">YLR423C</name>
</gene>
<feature type="chain" id="PRO_0000124566" description="Autophagy-related protein 17">
    <location>
        <begin position="1"/>
        <end position="417"/>
    </location>
</feature>
<feature type="coiled-coil region" evidence="1">
    <location>
        <begin position="146"/>
        <end position="221"/>
    </location>
</feature>
<feature type="coiled-coil region" evidence="1">
    <location>
        <begin position="353"/>
        <end position="384"/>
    </location>
</feature>
<feature type="mutagenesis site" description="Decreases affinity for ATG13." evidence="7">
    <original>C</original>
    <variation>R</variation>
    <location>
        <position position="24"/>
    </location>
</feature>
<keyword id="KW-0072">Autophagy</keyword>
<keyword id="KW-0175">Coiled coil</keyword>
<keyword id="KW-0963">Cytoplasm</keyword>
<keyword id="KW-0472">Membrane</keyword>
<keyword id="KW-1185">Reference proteome</keyword>